<reference key="1">
    <citation type="journal article" date="2006" name="Proc. Natl. Acad. Sci. U.S.A.">
        <title>A molecular neuroethological approach for identifying and characterizing a cascade of behaviorally regulated genes.</title>
        <authorList>
            <person name="Wada K."/>
            <person name="Howard J.T."/>
            <person name="McConnell P."/>
            <person name="Whitney O."/>
            <person name="Lints T."/>
            <person name="Rivas M.V."/>
            <person name="Horita H."/>
            <person name="Patterson M.A."/>
            <person name="White S.A."/>
            <person name="Scharff C."/>
            <person name="Haesler S."/>
            <person name="Zhao S."/>
            <person name="Sakaguchi H."/>
            <person name="Hagiwara M."/>
            <person name="Shiraki T."/>
            <person name="Hirozane-Kishikawa T."/>
            <person name="Skene P."/>
            <person name="Hayashizaki Y."/>
            <person name="Carninci P."/>
            <person name="Jarvis E.D."/>
        </authorList>
    </citation>
    <scope>NUCLEOTIDE SEQUENCE [LARGE SCALE MRNA]</scope>
    <source>
        <tissue>Brain</tissue>
    </source>
</reference>
<dbReference type="EMBL" id="DQ214094">
    <property type="protein sequence ID" value="ACH44161.1"/>
    <property type="molecule type" value="mRNA"/>
</dbReference>
<dbReference type="EMBL" id="DQ214098">
    <property type="protein sequence ID" value="ACH44164.1"/>
    <property type="molecule type" value="mRNA"/>
</dbReference>
<dbReference type="SMR" id="B5FYQ0"/>
<dbReference type="STRING" id="59729.ENSTGUP00000032998"/>
<dbReference type="Ensembl" id="ENSTGUT00000034756.1">
    <property type="protein sequence ID" value="ENSTGUP00000032998.1"/>
    <property type="gene ID" value="ENSTGUG00000019757.1"/>
</dbReference>
<dbReference type="GeneTree" id="ENSGT00940000155737"/>
<dbReference type="InParanoid" id="B5FYQ0"/>
<dbReference type="OMA" id="EGMEWVC"/>
<dbReference type="OrthoDB" id="2011769at2759"/>
<dbReference type="Proteomes" id="UP000007754">
    <property type="component" value="Chromosome 6"/>
</dbReference>
<dbReference type="GO" id="GO:0005930">
    <property type="term" value="C:axoneme"/>
    <property type="evidence" value="ECO:0007669"/>
    <property type="project" value="Ensembl"/>
</dbReference>
<dbReference type="GO" id="GO:0005813">
    <property type="term" value="C:centrosome"/>
    <property type="evidence" value="ECO:0000250"/>
    <property type="project" value="UniProtKB"/>
</dbReference>
<dbReference type="GO" id="GO:0036064">
    <property type="term" value="C:ciliary basal body"/>
    <property type="evidence" value="ECO:0007669"/>
    <property type="project" value="Ensembl"/>
</dbReference>
<dbReference type="GO" id="GO:0005929">
    <property type="term" value="C:cilium"/>
    <property type="evidence" value="ECO:0000250"/>
    <property type="project" value="UniProtKB"/>
</dbReference>
<dbReference type="GO" id="GO:0005881">
    <property type="term" value="C:cytoplasmic microtubule"/>
    <property type="evidence" value="ECO:0000250"/>
    <property type="project" value="UniProtKB"/>
</dbReference>
<dbReference type="GO" id="GO:0005794">
    <property type="term" value="C:Golgi apparatus"/>
    <property type="evidence" value="ECO:0000250"/>
    <property type="project" value="UniProtKB"/>
</dbReference>
<dbReference type="GO" id="GO:0000139">
    <property type="term" value="C:Golgi membrane"/>
    <property type="evidence" value="ECO:0007669"/>
    <property type="project" value="UniProtKB-SubCell"/>
</dbReference>
<dbReference type="GO" id="GO:0030496">
    <property type="term" value="C:midbody"/>
    <property type="evidence" value="ECO:0000250"/>
    <property type="project" value="UniProtKB"/>
</dbReference>
<dbReference type="GO" id="GO:0005654">
    <property type="term" value="C:nucleoplasm"/>
    <property type="evidence" value="ECO:0007669"/>
    <property type="project" value="Ensembl"/>
</dbReference>
<dbReference type="GO" id="GO:0005634">
    <property type="term" value="C:nucleus"/>
    <property type="evidence" value="ECO:0000250"/>
    <property type="project" value="UniProtKB"/>
</dbReference>
<dbReference type="GO" id="GO:0032391">
    <property type="term" value="C:photoreceptor connecting cilium"/>
    <property type="evidence" value="ECO:0000250"/>
    <property type="project" value="UniProtKB"/>
</dbReference>
<dbReference type="GO" id="GO:0005876">
    <property type="term" value="C:spindle microtubule"/>
    <property type="evidence" value="ECO:0000250"/>
    <property type="project" value="UniProtKB"/>
</dbReference>
<dbReference type="GO" id="GO:0019003">
    <property type="term" value="F:GDP binding"/>
    <property type="evidence" value="ECO:0000250"/>
    <property type="project" value="UniProtKB"/>
</dbReference>
<dbReference type="GO" id="GO:0005525">
    <property type="term" value="F:GTP binding"/>
    <property type="evidence" value="ECO:0000250"/>
    <property type="project" value="UniProtKB"/>
</dbReference>
<dbReference type="GO" id="GO:0003924">
    <property type="term" value="F:GTPase activity"/>
    <property type="evidence" value="ECO:0000250"/>
    <property type="project" value="UniProtKB"/>
</dbReference>
<dbReference type="GO" id="GO:0000287">
    <property type="term" value="F:magnesium ion binding"/>
    <property type="evidence" value="ECO:0007669"/>
    <property type="project" value="Ensembl"/>
</dbReference>
<dbReference type="GO" id="GO:0008017">
    <property type="term" value="F:microtubule binding"/>
    <property type="evidence" value="ECO:0000250"/>
    <property type="project" value="UniProtKB"/>
</dbReference>
<dbReference type="GO" id="GO:0060271">
    <property type="term" value="P:cilium assembly"/>
    <property type="evidence" value="ECO:0000250"/>
    <property type="project" value="UniProtKB"/>
</dbReference>
<dbReference type="GO" id="GO:0006893">
    <property type="term" value="P:Golgi to plasma membrane transport"/>
    <property type="evidence" value="ECO:0007669"/>
    <property type="project" value="Ensembl"/>
</dbReference>
<dbReference type="GO" id="GO:0042073">
    <property type="term" value="P:intraciliary transport"/>
    <property type="evidence" value="ECO:0007669"/>
    <property type="project" value="Ensembl"/>
</dbReference>
<dbReference type="GO" id="GO:0001822">
    <property type="term" value="P:kidney development"/>
    <property type="evidence" value="ECO:0000250"/>
    <property type="project" value="UniProtKB"/>
</dbReference>
<dbReference type="GO" id="GO:0000281">
    <property type="term" value="P:mitotic cytokinesis"/>
    <property type="evidence" value="ECO:0000250"/>
    <property type="project" value="UniProtKB"/>
</dbReference>
<dbReference type="GO" id="GO:0042461">
    <property type="term" value="P:photoreceptor cell development"/>
    <property type="evidence" value="ECO:0000250"/>
    <property type="project" value="UniProtKB"/>
</dbReference>
<dbReference type="GO" id="GO:1903441">
    <property type="term" value="P:protein localization to ciliary membrane"/>
    <property type="evidence" value="ECO:0007669"/>
    <property type="project" value="Ensembl"/>
</dbReference>
<dbReference type="GO" id="GO:0015031">
    <property type="term" value="P:protein transport"/>
    <property type="evidence" value="ECO:0007669"/>
    <property type="project" value="UniProtKB-KW"/>
</dbReference>
<dbReference type="GO" id="GO:0007264">
    <property type="term" value="P:small GTPase-mediated signal transduction"/>
    <property type="evidence" value="ECO:0000250"/>
    <property type="project" value="UniProtKB"/>
</dbReference>
<dbReference type="GO" id="GO:0007224">
    <property type="term" value="P:smoothened signaling pathway"/>
    <property type="evidence" value="ECO:0007669"/>
    <property type="project" value="Ensembl"/>
</dbReference>
<dbReference type="CDD" id="cd04155">
    <property type="entry name" value="Arl3"/>
    <property type="match status" value="1"/>
</dbReference>
<dbReference type="FunFam" id="3.40.50.300:FF:000281">
    <property type="entry name" value="ADP-ribosylation factor-like protein 3"/>
    <property type="match status" value="1"/>
</dbReference>
<dbReference type="Gene3D" id="3.40.50.300">
    <property type="entry name" value="P-loop containing nucleotide triphosphate hydrolases"/>
    <property type="match status" value="1"/>
</dbReference>
<dbReference type="InterPro" id="IPR044612">
    <property type="entry name" value="ARL2/3"/>
</dbReference>
<dbReference type="InterPro" id="IPR027417">
    <property type="entry name" value="P-loop_NTPase"/>
</dbReference>
<dbReference type="InterPro" id="IPR005225">
    <property type="entry name" value="Small_GTP-bd"/>
</dbReference>
<dbReference type="InterPro" id="IPR006689">
    <property type="entry name" value="Small_GTPase_ARF/SAR"/>
</dbReference>
<dbReference type="NCBIfam" id="TIGR00231">
    <property type="entry name" value="small_GTP"/>
    <property type="match status" value="1"/>
</dbReference>
<dbReference type="PANTHER" id="PTHR45697">
    <property type="entry name" value="ADP-RIBOSYLATION FACTOR-LIKE PROTEIN 2-RELATED"/>
    <property type="match status" value="1"/>
</dbReference>
<dbReference type="Pfam" id="PF00025">
    <property type="entry name" value="Arf"/>
    <property type="match status" value="1"/>
</dbReference>
<dbReference type="PRINTS" id="PR00328">
    <property type="entry name" value="SAR1GTPBP"/>
</dbReference>
<dbReference type="SMART" id="SM00177">
    <property type="entry name" value="ARF"/>
    <property type="match status" value="1"/>
</dbReference>
<dbReference type="SMART" id="SM00178">
    <property type="entry name" value="SAR"/>
    <property type="match status" value="1"/>
</dbReference>
<dbReference type="SUPFAM" id="SSF52540">
    <property type="entry name" value="P-loop containing nucleoside triphosphate hydrolases"/>
    <property type="match status" value="1"/>
</dbReference>
<dbReference type="PROSITE" id="PS51417">
    <property type="entry name" value="ARF"/>
    <property type="match status" value="1"/>
</dbReference>
<sequence>MGLLSILRKLKSTPDQEVRILLLGLDNAGKTTLLKQLASEDISHITPTQGFNIKSVQSQGFKLNVWDIGGQRKIRPYWRNYFENTDILIYVIDSADRKRFEETGQELAELLDEEKLSGVPVLIFANKQDLLTAAPASEIAEGLNLHTIRDRVWQIQSCSALSGEGVQDGMNWVCKNVSTKKK</sequence>
<comment type="function">
    <text evidence="1">Small GTP-binding protein which cycles between an inactive GDP-bound and an active GTP-bound form, and the rate of cycling is regulated by guanine nucleotide exchange factors (GEF) and GTPase-activating proteins (GAP). Required for normal cytokinesis and cilia signaling. Required for targeting proteins to the ciliary membrane by releasing myristoylated protein from unc119 cargo adapters into the cilium (By similarity).</text>
</comment>
<comment type="subcellular location">
    <subcellularLocation>
        <location evidence="1">Golgi apparatus membrane</location>
        <topology evidence="1">Peripheral membrane protein</topology>
        <orientation evidence="1">Cytoplasmic side</orientation>
    </subcellularLocation>
    <subcellularLocation>
        <location evidence="1">Cytoplasm</location>
        <location evidence="1">Cytoskeleton</location>
        <location evidence="1">Spindle</location>
    </subcellularLocation>
    <subcellularLocation>
        <location evidence="1">Nucleus</location>
    </subcellularLocation>
    <subcellularLocation>
        <location evidence="1">Cytoplasm</location>
        <location evidence="1">Cytoskeleton</location>
        <location evidence="1">Microtubule organizing center</location>
        <location evidence="1">Centrosome</location>
    </subcellularLocation>
    <subcellularLocation>
        <location evidence="1">Cytoplasm</location>
    </subcellularLocation>
    <subcellularLocation>
        <location evidence="1">Cell projection</location>
        <location evidence="1">Cilium</location>
    </subcellularLocation>
    <text evidence="1">Detected predominantly in the photoreceptor connecting cilium. Centrosome-associated throughout the cell cycle. Not detected to interphase microtubules. Present on the mitotic spindle (By similarity).</text>
</comment>
<comment type="similarity">
    <text evidence="3">Belongs to the small GTPase superfamily. Arf family.</text>
</comment>
<gene>
    <name type="primary">ARL3</name>
</gene>
<organism>
    <name type="scientific">Taeniopygia guttata</name>
    <name type="common">Zebra finch</name>
    <name type="synonym">Poephila guttata</name>
    <dbReference type="NCBI Taxonomy" id="59729"/>
    <lineage>
        <taxon>Eukaryota</taxon>
        <taxon>Metazoa</taxon>
        <taxon>Chordata</taxon>
        <taxon>Craniata</taxon>
        <taxon>Vertebrata</taxon>
        <taxon>Euteleostomi</taxon>
        <taxon>Archelosauria</taxon>
        <taxon>Archosauria</taxon>
        <taxon>Dinosauria</taxon>
        <taxon>Saurischia</taxon>
        <taxon>Theropoda</taxon>
        <taxon>Coelurosauria</taxon>
        <taxon>Aves</taxon>
        <taxon>Neognathae</taxon>
        <taxon>Neoaves</taxon>
        <taxon>Telluraves</taxon>
        <taxon>Australaves</taxon>
        <taxon>Passeriformes</taxon>
        <taxon>Passeroidea</taxon>
        <taxon>Estrildidae</taxon>
        <taxon>Estrildinae</taxon>
        <taxon>Taeniopygia</taxon>
    </lineage>
</organism>
<proteinExistence type="evidence at transcript level"/>
<evidence type="ECO:0000250" key="1"/>
<evidence type="ECO:0000255" key="2"/>
<evidence type="ECO:0000305" key="3"/>
<name>ARL3_TAEGU</name>
<protein>
    <recommendedName>
        <fullName>ADP-ribosylation factor-like protein 3</fullName>
    </recommendedName>
</protein>
<feature type="initiator methionine" description="Removed" evidence="2">
    <location>
        <position position="1"/>
    </location>
</feature>
<feature type="chain" id="PRO_0000356299" description="ADP-ribosylation factor-like protein 3">
    <location>
        <begin position="2"/>
        <end position="182"/>
    </location>
</feature>
<feature type="binding site" evidence="1">
    <location>
        <begin position="24"/>
        <end position="31"/>
    </location>
    <ligand>
        <name>GTP</name>
        <dbReference type="ChEBI" id="CHEBI:37565"/>
    </ligand>
</feature>
<feature type="binding site" evidence="1">
    <location>
        <begin position="67"/>
        <end position="71"/>
    </location>
    <ligand>
        <name>GTP</name>
        <dbReference type="ChEBI" id="CHEBI:37565"/>
    </ligand>
</feature>
<feature type="binding site" evidence="1">
    <location>
        <begin position="126"/>
        <end position="129"/>
    </location>
    <ligand>
        <name>GTP</name>
        <dbReference type="ChEBI" id="CHEBI:37565"/>
    </ligand>
</feature>
<feature type="lipid moiety-binding region" description="N-myristoyl glycine" evidence="2">
    <location>
        <position position="2"/>
    </location>
</feature>
<keyword id="KW-0131">Cell cycle</keyword>
<keyword id="KW-0132">Cell division</keyword>
<keyword id="KW-0966">Cell projection</keyword>
<keyword id="KW-0963">Cytoplasm</keyword>
<keyword id="KW-0206">Cytoskeleton</keyword>
<keyword id="KW-0333">Golgi apparatus</keyword>
<keyword id="KW-0342">GTP-binding</keyword>
<keyword id="KW-0449">Lipoprotein</keyword>
<keyword id="KW-0472">Membrane</keyword>
<keyword id="KW-0519">Myristate</keyword>
<keyword id="KW-0547">Nucleotide-binding</keyword>
<keyword id="KW-0539">Nucleus</keyword>
<keyword id="KW-0653">Protein transport</keyword>
<keyword id="KW-1185">Reference proteome</keyword>
<keyword id="KW-0813">Transport</keyword>
<accession>B5FYQ0</accession>